<accession>C0HLV9</accession>
<name>MP31_MOUSE</name>
<reference evidence="4" key="1">
    <citation type="journal article" date="2009" name="PLoS Biol.">
        <title>Lineage-specific biology revealed by a finished genome assembly of the mouse.</title>
        <authorList>
            <person name="Church D.M."/>
            <person name="Goodstadt L."/>
            <person name="Hillier L.W."/>
            <person name="Zody M.C."/>
            <person name="Goldstein S."/>
            <person name="She X."/>
            <person name="Bult C.J."/>
            <person name="Agarwala R."/>
            <person name="Cherry J.L."/>
            <person name="DiCuccio M."/>
            <person name="Hlavina W."/>
            <person name="Kapustin Y."/>
            <person name="Meric P."/>
            <person name="Maglott D."/>
            <person name="Birtle Z."/>
            <person name="Marques A.C."/>
            <person name="Graves T."/>
            <person name="Zhou S."/>
            <person name="Teague B."/>
            <person name="Potamousis K."/>
            <person name="Churas C."/>
            <person name="Place M."/>
            <person name="Herschleb J."/>
            <person name="Runnheim R."/>
            <person name="Forrest D."/>
            <person name="Amos-Landgraf J."/>
            <person name="Schwartz D.C."/>
            <person name="Cheng Z."/>
            <person name="Lindblad-Toh K."/>
            <person name="Eichler E.E."/>
            <person name="Ponting C.P."/>
        </authorList>
    </citation>
    <scope>NUCLEOTIDE SEQUENCE [LARGE SCALE GENOMIC DNA]</scope>
    <source>
        <strain>C57BL/6J</strain>
    </source>
</reference>
<reference evidence="4" key="2">
    <citation type="journal article" date="2021" name="Cell Metab.">
        <title>An Upstream Open Reading Frame in Phosphatase and Tensin Homolog Encodes a Circuit Breaker of Lactate Metabolism.</title>
        <authorList>
            <person name="Huang N."/>
            <person name="Li F."/>
            <person name="Zhang M."/>
            <person name="Zhou H."/>
            <person name="Chen Z."/>
            <person name="Ma X."/>
            <person name="Yang L."/>
            <person name="Wu X."/>
            <person name="Zhong J."/>
            <person name="Xiao F."/>
            <person name="Yang X."/>
            <person name="Zhao K."/>
            <person name="Li X."/>
            <person name="Xia X."/>
            <person name="Liu Z."/>
            <person name="Gao S."/>
            <person name="Zhang N."/>
        </authorList>
    </citation>
    <scope>IDENTIFICATION</scope>
    <scope>TISSUE SPECIFICITY</scope>
    <scope>DISRUPTION PHENOTYPE</scope>
</reference>
<reference evidence="4" key="3">
    <citation type="journal article" date="2021" name="Cell Metab.">
        <authorList>
            <person name="Huang N."/>
            <person name="Li F."/>
            <person name="Zhang M."/>
            <person name="Zhou H."/>
            <person name="Chen Z."/>
            <person name="Ma X."/>
            <person name="Yang L."/>
            <person name="Wu X."/>
            <person name="Zhong J."/>
            <person name="Xiao F."/>
            <person name="Yang X."/>
            <person name="Zhao K."/>
            <person name="Li X."/>
            <person name="Xia X."/>
            <person name="Liu Z."/>
            <person name="Gao S."/>
            <person name="Zhang N."/>
        </authorList>
    </citation>
    <scope>ERRATUM OF PUBMED:33406399</scope>
</reference>
<evidence type="ECO:0000250" key="1">
    <source>
        <dbReference type="UniProtKB" id="C0HLV8"/>
    </source>
</evidence>
<evidence type="ECO:0000269" key="2">
    <source>
    </source>
</evidence>
<evidence type="ECO:0000303" key="3">
    <source>
    </source>
</evidence>
<evidence type="ECO:0000305" key="4"/>
<evidence type="ECO:0000312" key="5">
    <source>
        <dbReference type="MGI" id="MGI:7572986"/>
    </source>
</evidence>
<comment type="function">
    <text evidence="1">Inhibits lactate dehydrogenase (LDH)-mediated conversion of lactate to pyruvate in mitochondria by competing with mitochondrial LDH for binding to NAD(+). Also inhibits cellular lactate utilization.</text>
</comment>
<comment type="subunit">
    <text evidence="1">Interacts with lactate dehydrogenases LDHA and LDHB; interaction with mitochondrial LDH leads to inhibition of lactate dehydrogenase activity, preventing conversion of lactate to pyruvate.</text>
</comment>
<comment type="subcellular location">
    <subcellularLocation>
        <location evidence="1">Mitochondrion</location>
    </subcellularLocation>
</comment>
<comment type="tissue specificity">
    <text evidence="2">Detected in brain, kidney and liver (at protein level).</text>
</comment>
<comment type="disruption phenotype">
    <text evidence="2">Enhanced global lactate metabolism with elevated glucose consumption, increased ATP production and decreased perigonadal fat pad weight and fat/body weight ratio (PubMed:33406399). Elevated serum and secreted lactate levels (PubMed:33406399). Conditional knockout in astrocytes results in initiation of gliomagenesis and development of neurological symptoms that include seizure, ataxia and/or paralysis at 55-65 weeks of age (PubMed:33406399).</text>
</comment>
<organism>
    <name type="scientific">Mus musculus</name>
    <name type="common">Mouse</name>
    <dbReference type="NCBI Taxonomy" id="10090"/>
    <lineage>
        <taxon>Eukaryota</taxon>
        <taxon>Metazoa</taxon>
        <taxon>Chordata</taxon>
        <taxon>Craniata</taxon>
        <taxon>Vertebrata</taxon>
        <taxon>Euteleostomi</taxon>
        <taxon>Mammalia</taxon>
        <taxon>Eutheria</taxon>
        <taxon>Euarchontoglires</taxon>
        <taxon>Glires</taxon>
        <taxon>Rodentia</taxon>
        <taxon>Myomorpha</taxon>
        <taxon>Muroidea</taxon>
        <taxon>Muridae</taxon>
        <taxon>Murinae</taxon>
        <taxon>Mus</taxon>
        <taxon>Mus</taxon>
    </lineage>
</organism>
<sequence>MWRDSLCTAAGYALGRRDAAALSSLLSEAAAMMEV</sequence>
<dbReference type="EMBL" id="AC162887">
    <property type="status" value="NOT_ANNOTATED_CDS"/>
    <property type="molecule type" value="Genomic_DNA"/>
</dbReference>
<dbReference type="SMR" id="C0HLV9"/>
<dbReference type="Ensembl" id="ENSMUST00000249246.1">
    <property type="protein sequence ID" value="ENSMUSP00000159626.1"/>
    <property type="gene ID" value="ENSMUSG00000121574.1"/>
</dbReference>
<dbReference type="MGI" id="MGI:7572986">
    <property type="gene designation" value="Mldhr"/>
</dbReference>
<dbReference type="InParanoid" id="C0HLV9"/>
<dbReference type="PRO" id="PR:C0HLV9"/>
<dbReference type="Proteomes" id="UP000000589">
    <property type="component" value="Chromosome 19"/>
</dbReference>
<dbReference type="GO" id="GO:0005739">
    <property type="term" value="C:mitochondrion"/>
    <property type="evidence" value="ECO:0000250"/>
    <property type="project" value="UniProtKB"/>
</dbReference>
<dbReference type="GO" id="GO:0160193">
    <property type="term" value="F:L-lactate dehydrogenase inhibitor activity"/>
    <property type="evidence" value="ECO:0000250"/>
    <property type="project" value="UniProtKB"/>
</dbReference>
<dbReference type="InterPro" id="IPR054159">
    <property type="entry name" value="MP31"/>
</dbReference>
<dbReference type="Pfam" id="PF22001">
    <property type="entry name" value="MP31"/>
    <property type="match status" value="1"/>
</dbReference>
<protein>
    <recommendedName>
        <fullName evidence="4">PTEN upstream open reading frame MP31</fullName>
    </recommendedName>
    <alternativeName>
        <fullName evidence="3">Micropeptide 31</fullName>
    </alternativeName>
    <alternativeName>
        <fullName>Mitochondrial lactate dehydrogenase regulator</fullName>
    </alternativeName>
</protein>
<keyword id="KW-0496">Mitochondrion</keyword>
<keyword id="KW-1185">Reference proteome</keyword>
<feature type="chain" id="PRO_0000453001" description="PTEN upstream open reading frame MP31">
    <location>
        <begin position="1"/>
        <end position="35"/>
    </location>
</feature>
<gene>
    <name evidence="5" type="primary">Mldhr</name>
    <name evidence="3" type="synonym">Mp31</name>
</gene>
<proteinExistence type="evidence at protein level"/>